<keyword id="KW-0067">ATP-binding</keyword>
<keyword id="KW-0963">Cytoplasm</keyword>
<keyword id="KW-0227">DNA damage</keyword>
<keyword id="KW-0233">DNA recombination</keyword>
<keyword id="KW-0234">DNA repair</keyword>
<keyword id="KW-0238">DNA-binding</keyword>
<keyword id="KW-0378">Hydrolase</keyword>
<keyword id="KW-0547">Nucleotide-binding</keyword>
<protein>
    <recommendedName>
        <fullName evidence="1">Holliday junction branch migration complex subunit RuvB</fullName>
        <ecNumber evidence="1">3.6.4.-</ecNumber>
    </recommendedName>
</protein>
<sequence length="331" mass="37382">MDDRMVDQALHSEETSFELSLRPTMLKQYIGQSSIKNNLEVFIKAAKLREEPLDHVLLFGPPGLGKTTLSNIIANEMNVNIRTVSGPSLDRPGDLAAILSGLQPGDVLFIDEIHRLSSTVEEVLYSAMEDFFIDIIIGKGDEARSIRIDLPPFTLVGATTRAGSLTGPLRDRFGVHLRLEYYNENDLKEIIIRTAEVLNTKIDDESATELAKRSRGTPRVANRLLKRVRDFQQVNEDEQIYIETTKQALQLLQVDAEGLDYIDHKMMRCIINQYDGGPVGLDTIAVSIGEERITIEDVYEPFLIQKGFIERTPRGRKATAFAYEHFKNFNK</sequence>
<comment type="function">
    <text evidence="1">The RuvA-RuvB-RuvC complex processes Holliday junction (HJ) DNA during genetic recombination and DNA repair, while the RuvA-RuvB complex plays an important role in the rescue of blocked DNA replication forks via replication fork reversal (RFR). RuvA specifically binds to HJ cruciform DNA, conferring on it an open structure. The RuvB hexamer acts as an ATP-dependent pump, pulling dsDNA into and through the RuvAB complex. RuvB forms 2 homohexamers on either side of HJ DNA bound by 1 or 2 RuvA tetramers; 4 subunits per hexamer contact DNA at a time. Coordinated motions by a converter formed by DNA-disengaged RuvB subunits stimulates ATP hydrolysis and nucleotide exchange. Immobilization of the converter enables RuvB to convert the ATP-contained energy into a lever motion, pulling 2 nucleotides of DNA out of the RuvA tetramer per ATP hydrolyzed, thus driving DNA branch migration. The RuvB motors rotate together with the DNA substrate, which together with the progressing nucleotide cycle form the mechanistic basis for DNA recombination by continuous HJ branch migration. Branch migration allows RuvC to scan DNA until it finds its consensus sequence, where it cleaves and resolves cruciform DNA.</text>
</comment>
<comment type="catalytic activity">
    <reaction evidence="1">
        <text>ATP + H2O = ADP + phosphate + H(+)</text>
        <dbReference type="Rhea" id="RHEA:13065"/>
        <dbReference type="ChEBI" id="CHEBI:15377"/>
        <dbReference type="ChEBI" id="CHEBI:15378"/>
        <dbReference type="ChEBI" id="CHEBI:30616"/>
        <dbReference type="ChEBI" id="CHEBI:43474"/>
        <dbReference type="ChEBI" id="CHEBI:456216"/>
    </reaction>
</comment>
<comment type="subunit">
    <text evidence="1">Homohexamer. Forms an RuvA(8)-RuvB(12)-Holliday junction (HJ) complex. HJ DNA is sandwiched between 2 RuvA tetramers; dsDNA enters through RuvA and exits via RuvB. An RuvB hexamer assembles on each DNA strand where it exits the tetramer. Each RuvB hexamer is contacted by two RuvA subunits (via domain III) on 2 adjacent RuvB subunits; this complex drives branch migration. In the full resolvosome a probable DNA-RuvA(4)-RuvB(12)-RuvC(2) complex forms which resolves the HJ.</text>
</comment>
<comment type="subcellular location">
    <subcellularLocation>
        <location evidence="1">Cytoplasm</location>
    </subcellularLocation>
</comment>
<comment type="domain">
    <text evidence="1">Has 3 domains, the large (RuvB-L) and small ATPase (RuvB-S) domains and the C-terminal head (RuvB-H) domain. The head domain binds DNA, while the ATPase domains jointly bind ATP, ADP or are empty depending on the state of the subunit in the translocation cycle. During a single DNA translocation step the structure of each domain remains the same, but their relative positions change.</text>
</comment>
<comment type="similarity">
    <text evidence="1">Belongs to the RuvB family.</text>
</comment>
<gene>
    <name evidence="1" type="primary">ruvB</name>
    <name type="ordered locus">SH1280</name>
</gene>
<reference key="1">
    <citation type="journal article" date="2005" name="J. Bacteriol.">
        <title>Whole-genome sequencing of Staphylococcus haemolyticus uncovers the extreme plasticity of its genome and the evolution of human-colonizing staphylococcal species.</title>
        <authorList>
            <person name="Takeuchi F."/>
            <person name="Watanabe S."/>
            <person name="Baba T."/>
            <person name="Yuzawa H."/>
            <person name="Ito T."/>
            <person name="Morimoto Y."/>
            <person name="Kuroda M."/>
            <person name="Cui L."/>
            <person name="Takahashi M."/>
            <person name="Ankai A."/>
            <person name="Baba S."/>
            <person name="Fukui S."/>
            <person name="Lee J.C."/>
            <person name="Hiramatsu K."/>
        </authorList>
    </citation>
    <scope>NUCLEOTIDE SEQUENCE [LARGE SCALE GENOMIC DNA]</scope>
    <source>
        <strain>JCSC1435</strain>
    </source>
</reference>
<proteinExistence type="inferred from homology"/>
<evidence type="ECO:0000255" key="1">
    <source>
        <dbReference type="HAMAP-Rule" id="MF_00016"/>
    </source>
</evidence>
<dbReference type="EC" id="3.6.4.-" evidence="1"/>
<dbReference type="EMBL" id="AP006716">
    <property type="protein sequence ID" value="BAE04589.1"/>
    <property type="molecule type" value="Genomic_DNA"/>
</dbReference>
<dbReference type="RefSeq" id="WP_011275578.1">
    <property type="nucleotide sequence ID" value="NC_007168.1"/>
</dbReference>
<dbReference type="SMR" id="Q4L6Y6"/>
<dbReference type="GeneID" id="93780682"/>
<dbReference type="KEGG" id="sha:SH1280"/>
<dbReference type="eggNOG" id="COG2255">
    <property type="taxonomic scope" value="Bacteria"/>
</dbReference>
<dbReference type="HOGENOM" id="CLU_055599_1_0_9"/>
<dbReference type="OrthoDB" id="9804478at2"/>
<dbReference type="Proteomes" id="UP000000543">
    <property type="component" value="Chromosome"/>
</dbReference>
<dbReference type="GO" id="GO:0005737">
    <property type="term" value="C:cytoplasm"/>
    <property type="evidence" value="ECO:0007669"/>
    <property type="project" value="UniProtKB-SubCell"/>
</dbReference>
<dbReference type="GO" id="GO:0048476">
    <property type="term" value="C:Holliday junction resolvase complex"/>
    <property type="evidence" value="ECO:0007669"/>
    <property type="project" value="UniProtKB-UniRule"/>
</dbReference>
<dbReference type="GO" id="GO:0005524">
    <property type="term" value="F:ATP binding"/>
    <property type="evidence" value="ECO:0007669"/>
    <property type="project" value="UniProtKB-UniRule"/>
</dbReference>
<dbReference type="GO" id="GO:0016887">
    <property type="term" value="F:ATP hydrolysis activity"/>
    <property type="evidence" value="ECO:0007669"/>
    <property type="project" value="InterPro"/>
</dbReference>
<dbReference type="GO" id="GO:0000400">
    <property type="term" value="F:four-way junction DNA binding"/>
    <property type="evidence" value="ECO:0007669"/>
    <property type="project" value="UniProtKB-UniRule"/>
</dbReference>
<dbReference type="GO" id="GO:0009378">
    <property type="term" value="F:four-way junction helicase activity"/>
    <property type="evidence" value="ECO:0007669"/>
    <property type="project" value="InterPro"/>
</dbReference>
<dbReference type="GO" id="GO:0006310">
    <property type="term" value="P:DNA recombination"/>
    <property type="evidence" value="ECO:0007669"/>
    <property type="project" value="UniProtKB-UniRule"/>
</dbReference>
<dbReference type="GO" id="GO:0006281">
    <property type="term" value="P:DNA repair"/>
    <property type="evidence" value="ECO:0007669"/>
    <property type="project" value="UniProtKB-UniRule"/>
</dbReference>
<dbReference type="CDD" id="cd00009">
    <property type="entry name" value="AAA"/>
    <property type="match status" value="1"/>
</dbReference>
<dbReference type="Gene3D" id="1.10.8.60">
    <property type="match status" value="1"/>
</dbReference>
<dbReference type="Gene3D" id="3.40.50.300">
    <property type="entry name" value="P-loop containing nucleotide triphosphate hydrolases"/>
    <property type="match status" value="1"/>
</dbReference>
<dbReference type="Gene3D" id="1.10.10.10">
    <property type="entry name" value="Winged helix-like DNA-binding domain superfamily/Winged helix DNA-binding domain"/>
    <property type="match status" value="1"/>
</dbReference>
<dbReference type="HAMAP" id="MF_00016">
    <property type="entry name" value="DNA_HJ_migration_RuvB"/>
    <property type="match status" value="1"/>
</dbReference>
<dbReference type="InterPro" id="IPR003593">
    <property type="entry name" value="AAA+_ATPase"/>
</dbReference>
<dbReference type="InterPro" id="IPR041445">
    <property type="entry name" value="AAA_lid_4"/>
</dbReference>
<dbReference type="InterPro" id="IPR004605">
    <property type="entry name" value="DNA_helicase_Holl-junc_RuvB"/>
</dbReference>
<dbReference type="InterPro" id="IPR027417">
    <property type="entry name" value="P-loop_NTPase"/>
</dbReference>
<dbReference type="InterPro" id="IPR008824">
    <property type="entry name" value="RuvB-like_N"/>
</dbReference>
<dbReference type="InterPro" id="IPR008823">
    <property type="entry name" value="RuvB_C"/>
</dbReference>
<dbReference type="InterPro" id="IPR036388">
    <property type="entry name" value="WH-like_DNA-bd_sf"/>
</dbReference>
<dbReference type="InterPro" id="IPR036390">
    <property type="entry name" value="WH_DNA-bd_sf"/>
</dbReference>
<dbReference type="NCBIfam" id="NF000868">
    <property type="entry name" value="PRK00080.1"/>
    <property type="match status" value="1"/>
</dbReference>
<dbReference type="NCBIfam" id="TIGR00635">
    <property type="entry name" value="ruvB"/>
    <property type="match status" value="1"/>
</dbReference>
<dbReference type="PANTHER" id="PTHR42848">
    <property type="match status" value="1"/>
</dbReference>
<dbReference type="PANTHER" id="PTHR42848:SF1">
    <property type="entry name" value="HOLLIDAY JUNCTION BRANCH MIGRATION COMPLEX SUBUNIT RUVB"/>
    <property type="match status" value="1"/>
</dbReference>
<dbReference type="Pfam" id="PF17864">
    <property type="entry name" value="AAA_lid_4"/>
    <property type="match status" value="1"/>
</dbReference>
<dbReference type="Pfam" id="PF05491">
    <property type="entry name" value="RuvB_C"/>
    <property type="match status" value="1"/>
</dbReference>
<dbReference type="Pfam" id="PF05496">
    <property type="entry name" value="RuvB_N"/>
    <property type="match status" value="1"/>
</dbReference>
<dbReference type="SMART" id="SM00382">
    <property type="entry name" value="AAA"/>
    <property type="match status" value="1"/>
</dbReference>
<dbReference type="SUPFAM" id="SSF52540">
    <property type="entry name" value="P-loop containing nucleoside triphosphate hydrolases"/>
    <property type="match status" value="1"/>
</dbReference>
<dbReference type="SUPFAM" id="SSF46785">
    <property type="entry name" value="Winged helix' DNA-binding domain"/>
    <property type="match status" value="1"/>
</dbReference>
<organism>
    <name type="scientific">Staphylococcus haemolyticus (strain JCSC1435)</name>
    <dbReference type="NCBI Taxonomy" id="279808"/>
    <lineage>
        <taxon>Bacteria</taxon>
        <taxon>Bacillati</taxon>
        <taxon>Bacillota</taxon>
        <taxon>Bacilli</taxon>
        <taxon>Bacillales</taxon>
        <taxon>Staphylococcaceae</taxon>
        <taxon>Staphylococcus</taxon>
    </lineage>
</organism>
<name>RUVB_STAHJ</name>
<accession>Q4L6Y6</accession>
<feature type="chain" id="PRO_0000235410" description="Holliday junction branch migration complex subunit RuvB">
    <location>
        <begin position="1"/>
        <end position="331"/>
    </location>
</feature>
<feature type="region of interest" description="Large ATPase domain (RuvB-L)" evidence="1">
    <location>
        <begin position="1"/>
        <end position="182"/>
    </location>
</feature>
<feature type="region of interest" description="Small ATPAse domain (RuvB-S)" evidence="1">
    <location>
        <begin position="183"/>
        <end position="253"/>
    </location>
</feature>
<feature type="region of interest" description="Head domain (RuvB-H)" evidence="1">
    <location>
        <begin position="256"/>
        <end position="331"/>
    </location>
</feature>
<feature type="binding site" evidence="1">
    <location>
        <position position="21"/>
    </location>
    <ligand>
        <name>ATP</name>
        <dbReference type="ChEBI" id="CHEBI:30616"/>
    </ligand>
</feature>
<feature type="binding site" evidence="1">
    <location>
        <position position="22"/>
    </location>
    <ligand>
        <name>ATP</name>
        <dbReference type="ChEBI" id="CHEBI:30616"/>
    </ligand>
</feature>
<feature type="binding site" evidence="1">
    <location>
        <position position="63"/>
    </location>
    <ligand>
        <name>ATP</name>
        <dbReference type="ChEBI" id="CHEBI:30616"/>
    </ligand>
</feature>
<feature type="binding site" evidence="1">
    <location>
        <position position="66"/>
    </location>
    <ligand>
        <name>ATP</name>
        <dbReference type="ChEBI" id="CHEBI:30616"/>
    </ligand>
</feature>
<feature type="binding site" evidence="1">
    <location>
        <position position="67"/>
    </location>
    <ligand>
        <name>ATP</name>
        <dbReference type="ChEBI" id="CHEBI:30616"/>
    </ligand>
</feature>
<feature type="binding site" evidence="1">
    <location>
        <position position="67"/>
    </location>
    <ligand>
        <name>Mg(2+)</name>
        <dbReference type="ChEBI" id="CHEBI:18420"/>
    </ligand>
</feature>
<feature type="binding site" evidence="1">
    <location>
        <position position="68"/>
    </location>
    <ligand>
        <name>ATP</name>
        <dbReference type="ChEBI" id="CHEBI:30616"/>
    </ligand>
</feature>
<feature type="binding site" evidence="1">
    <location>
        <begin position="129"/>
        <end position="131"/>
    </location>
    <ligand>
        <name>ATP</name>
        <dbReference type="ChEBI" id="CHEBI:30616"/>
    </ligand>
</feature>
<feature type="binding site" evidence="1">
    <location>
        <position position="172"/>
    </location>
    <ligand>
        <name>ATP</name>
        <dbReference type="ChEBI" id="CHEBI:30616"/>
    </ligand>
</feature>
<feature type="binding site" evidence="1">
    <location>
        <position position="182"/>
    </location>
    <ligand>
        <name>ATP</name>
        <dbReference type="ChEBI" id="CHEBI:30616"/>
    </ligand>
</feature>
<feature type="binding site" evidence="1">
    <location>
        <position position="219"/>
    </location>
    <ligand>
        <name>ATP</name>
        <dbReference type="ChEBI" id="CHEBI:30616"/>
    </ligand>
</feature>
<feature type="binding site" evidence="1">
    <location>
        <position position="292"/>
    </location>
    <ligand>
        <name>DNA</name>
        <dbReference type="ChEBI" id="CHEBI:16991"/>
    </ligand>
</feature>
<feature type="binding site" evidence="1">
    <location>
        <position position="311"/>
    </location>
    <ligand>
        <name>DNA</name>
        <dbReference type="ChEBI" id="CHEBI:16991"/>
    </ligand>
</feature>
<feature type="binding site" evidence="1">
    <location>
        <position position="316"/>
    </location>
    <ligand>
        <name>DNA</name>
        <dbReference type="ChEBI" id="CHEBI:16991"/>
    </ligand>
</feature>